<name>UCSI_ACRSP</name>
<reference key="1">
    <citation type="journal article" date="2018" name="J. Am. Chem. Soc.">
        <title>Genome mining and assembly-line biosynthesis of the UCS1025A pyrrolizidinone family of fungal alkaloids.</title>
        <authorList>
            <person name="Li L."/>
            <person name="Tang M.C."/>
            <person name="Tang S."/>
            <person name="Gao S."/>
            <person name="Soliman S."/>
            <person name="Hang L."/>
            <person name="Xu W."/>
            <person name="Ye T."/>
            <person name="Watanabe K."/>
            <person name="Tang Y."/>
        </authorList>
    </citation>
    <scope>NUCLEOTIDE SEQUENCE [GENOMIC DNA]</scope>
    <scope>FUNCTION</scope>
    <scope>PATHWAY</scope>
    <source>
        <strain>KY4917</strain>
    </source>
</reference>
<sequence>MSPTDMKAVVFYGPHSIAIESRPIPKVQHDKDIVVKVSASGLCGSDLHYFRGHEVVDSAGFIMGHEFVGEVVEAGRAVTTVRPGDKVVSPFTVSCGDCFYCKLQNSSRCVHCQVFGSNGLDGAQAEYVRVPLADSTVVRAPPGLSDDALILMADIFPTGFFGARNAMAGLGAQDPTEAVVVVIGCGPVGLCAIVSALEYRPRVVFAIDSVDSRLGLAEKLGARPLDLKKGVPSIISAVQEVTEGRGADAVVEVVGQGPALRTAYDIIRPFGSISSIGAHHSAMPFSATDGYE</sequence>
<proteinExistence type="inferred from homology"/>
<accession>A0A411KUQ9</accession>
<gene>
    <name evidence="3" type="primary">ucsI</name>
</gene>
<organism>
    <name type="scientific">Acremonium sp</name>
    <dbReference type="NCBI Taxonomy" id="2046025"/>
    <lineage>
        <taxon>Eukaryota</taxon>
        <taxon>Fungi</taxon>
        <taxon>Dikarya</taxon>
        <taxon>Ascomycota</taxon>
        <taxon>Pezizomycotina</taxon>
        <taxon>Sordariomycetes</taxon>
        <taxon>Hypocreomycetidae</taxon>
        <taxon>Hypocreales</taxon>
        <taxon>Hypocreales incertae sedis</taxon>
        <taxon>Acremonium</taxon>
    </lineage>
</organism>
<keyword id="KW-0479">Metal-binding</keyword>
<keyword id="KW-0520">NAD</keyword>
<keyword id="KW-0560">Oxidoreductase</keyword>
<keyword id="KW-0862">Zinc</keyword>
<evidence type="ECO:0000250" key="1">
    <source>
        <dbReference type="UniProtKB" id="P27867"/>
    </source>
</evidence>
<evidence type="ECO:0000269" key="2">
    <source>
    </source>
</evidence>
<evidence type="ECO:0000303" key="3">
    <source>
    </source>
</evidence>
<evidence type="ECO:0000305" key="4"/>
<evidence type="ECO:0000305" key="5">
    <source>
    </source>
</evidence>
<feature type="chain" id="PRO_0000450539" description="Medium chain reductase/dehydrogenase ucsI">
    <location>
        <begin position="1"/>
        <end position="292"/>
    </location>
</feature>
<feature type="binding site" evidence="1">
    <location>
        <position position="43"/>
    </location>
    <ligand>
        <name>Zn(2+)</name>
        <dbReference type="ChEBI" id="CHEBI:29105"/>
        <note>catalytic</note>
    </ligand>
</feature>
<feature type="binding site" evidence="1">
    <location>
        <position position="49"/>
    </location>
    <ligand>
        <name>substrate</name>
    </ligand>
</feature>
<feature type="binding site" evidence="1">
    <location>
        <position position="65"/>
    </location>
    <ligand>
        <name>Zn(2+)</name>
        <dbReference type="ChEBI" id="CHEBI:29105"/>
        <note>catalytic</note>
    </ligand>
</feature>
<feature type="binding site" evidence="1">
    <location>
        <position position="66"/>
    </location>
    <ligand>
        <name>Zn(2+)</name>
        <dbReference type="ChEBI" id="CHEBI:29105"/>
        <note>catalytic</note>
    </ligand>
</feature>
<feature type="binding site" evidence="1">
    <location>
        <begin position="184"/>
        <end position="189"/>
    </location>
    <ligand>
        <name>NAD(+)</name>
        <dbReference type="ChEBI" id="CHEBI:57540"/>
    </ligand>
</feature>
<feature type="binding site" evidence="1">
    <location>
        <position position="208"/>
    </location>
    <ligand>
        <name>NAD(+)</name>
        <dbReference type="ChEBI" id="CHEBI:57540"/>
    </ligand>
</feature>
<feature type="binding site" evidence="1">
    <location>
        <position position="213"/>
    </location>
    <ligand>
        <name>NAD(+)</name>
        <dbReference type="ChEBI" id="CHEBI:57540"/>
    </ligand>
</feature>
<feature type="binding site" evidence="1">
    <location>
        <begin position="276"/>
        <end position="278"/>
    </location>
    <ligand>
        <name>NAD(+)</name>
        <dbReference type="ChEBI" id="CHEBI:57540"/>
    </ligand>
</feature>
<dbReference type="EC" id="1.-.-.-" evidence="5"/>
<dbReference type="EMBL" id="MH375772">
    <property type="protein sequence ID" value="QBC88153.1"/>
    <property type="molecule type" value="Genomic_DNA"/>
</dbReference>
<dbReference type="SMR" id="A0A411KUQ9"/>
<dbReference type="GO" id="GO:0016491">
    <property type="term" value="F:oxidoreductase activity"/>
    <property type="evidence" value="ECO:0007669"/>
    <property type="project" value="UniProtKB-KW"/>
</dbReference>
<dbReference type="GO" id="GO:0008270">
    <property type="term" value="F:zinc ion binding"/>
    <property type="evidence" value="ECO:0007669"/>
    <property type="project" value="InterPro"/>
</dbReference>
<dbReference type="Gene3D" id="3.90.180.10">
    <property type="entry name" value="Medium-chain alcohol dehydrogenases, catalytic domain"/>
    <property type="match status" value="1"/>
</dbReference>
<dbReference type="Gene3D" id="3.40.50.720">
    <property type="entry name" value="NAD(P)-binding Rossmann-like Domain"/>
    <property type="match status" value="1"/>
</dbReference>
<dbReference type="InterPro" id="IPR013149">
    <property type="entry name" value="ADH-like_C"/>
</dbReference>
<dbReference type="InterPro" id="IPR013154">
    <property type="entry name" value="ADH-like_N"/>
</dbReference>
<dbReference type="InterPro" id="IPR002328">
    <property type="entry name" value="ADH_Zn_CS"/>
</dbReference>
<dbReference type="InterPro" id="IPR011032">
    <property type="entry name" value="GroES-like_sf"/>
</dbReference>
<dbReference type="InterPro" id="IPR036291">
    <property type="entry name" value="NAD(P)-bd_dom_sf"/>
</dbReference>
<dbReference type="PANTHER" id="PTHR42813:SF2">
    <property type="entry name" value="DEHYDROGENASE, ZINC-CONTAINING, PUTATIVE (AFU_ORTHOLOGUE AFUA_2G02810)-RELATED"/>
    <property type="match status" value="1"/>
</dbReference>
<dbReference type="PANTHER" id="PTHR42813">
    <property type="entry name" value="ZINC-TYPE ALCOHOL DEHYDROGENASE-LIKE"/>
    <property type="match status" value="1"/>
</dbReference>
<dbReference type="Pfam" id="PF08240">
    <property type="entry name" value="ADH_N"/>
    <property type="match status" value="1"/>
</dbReference>
<dbReference type="Pfam" id="PF00107">
    <property type="entry name" value="ADH_zinc_N"/>
    <property type="match status" value="1"/>
</dbReference>
<dbReference type="SUPFAM" id="SSF50129">
    <property type="entry name" value="GroES-like"/>
    <property type="match status" value="1"/>
</dbReference>
<dbReference type="SUPFAM" id="SSF51735">
    <property type="entry name" value="NAD(P)-binding Rossmann-fold domains"/>
    <property type="match status" value="1"/>
</dbReference>
<dbReference type="PROSITE" id="PS00059">
    <property type="entry name" value="ADH_ZINC"/>
    <property type="match status" value="1"/>
</dbReference>
<comment type="function">
    <text evidence="2 5">Medium chain reductase/dehydrogenase; part of the gene cluster that mediates the biosynthesis of UCS1025A, a member of the pyrrolizidinone family that acts as a strong telomerase inhibitor and displays potent antibacterial and antitumor properties (PubMed:29373009). These compounds share a hemiaminal-containing pyrrolizidinone core fused with a gamma-lactone, giving a furopyrrolizidine that is connected to a decalin fragment (PubMed:29373009). The polyketide synthase module (PKS) of the PKS-NRPS ucsA is responsible for the synthesis of the polyketide backbone via the condensation of an acetyl-CoA starter unit with 6 malonyl-CoA units (PubMed:29373009). The downstream nonribosomal peptide synthetase (NRPS) module then amidates the carboxyl end of the polyketide with a 2S,3S-methylproline derived from L-isoleucine by the 2-oxoglutarate-dependent dioxygenase ucsF which converts L-isoleucine to (4S,5S)-4-methylpyrroline-5-carboxylate that is further converted to 2S,3S-methylproline by the pyrroline-5-carboxylate reductase ucsG (PubMed:29373009). Reductive release of the completed aminoacyl polyketide from the assembly line can form the 3-pyrrolin-2-one structure via an intramolecular Knoevenagel reaction (PubMed:29373009). Because ucsA lacks a designated enoylreductase (ER) domain, the required activity is provided the enoyl reductase ucsL (PubMed:29373009). This keto acyclic precursor is the substrate of the Diels-Alderase ucsH, that catalyzes the Diels-Alder cycloaddition (PubMed:29373009). Oxidation of the 3S-methyl group to a carboxylate by the cytochrome P450 monooxygenase ucsK allows an oxa-Michael cyclization that might involve the reductase/dehydrogenase ucsI and which furnishes the furopyrrolizidine (PubMed:29373009). The oxidase ucsJ likely plays a critical role in stereoselective reduction of the C5-C6 double bond to afford the required R-configured carboxylate group (Probable). Further enolization and oxidation at C5 by an unidentified enzyme affords the last intermediate that can undergo oxa-Michael cyclization to yield UCS1025A (Probable).</text>
</comment>
<comment type="cofactor">
    <cofactor evidence="1">
        <name>Zn(2+)</name>
        <dbReference type="ChEBI" id="CHEBI:29105"/>
    </cofactor>
    <text evidence="1">Binds 1 zinc ion per subunit.</text>
</comment>
<comment type="pathway">
    <text evidence="5">Mycotoxin biosynthesis.</text>
</comment>
<comment type="similarity">
    <text evidence="4">Belongs to the zinc-containing alcohol dehydrogenase family.</text>
</comment>
<protein>
    <recommendedName>
        <fullName evidence="3">Medium chain reductase/dehydrogenase ucsI</fullName>
        <ecNumber evidence="5">1.-.-.-</ecNumber>
    </recommendedName>
    <alternativeName>
        <fullName evidence="3">UCS1025A pyrrolizidinone biosynthesis cluster protein I</fullName>
    </alternativeName>
</protein>